<feature type="chain" id="PRO_0000379886" description="HTLV-1 basic zipper factor">
    <location>
        <begin position="1"/>
        <end position="209"/>
    </location>
</feature>
<feature type="region of interest" description="Disordered" evidence="1">
    <location>
        <begin position="48"/>
        <end position="162"/>
    </location>
</feature>
<feature type="short sequence motif" description="Nuclear localization signal 1">
    <location>
        <begin position="87"/>
        <end position="92"/>
    </location>
</feature>
<feature type="short sequence motif" description="Nuclear localization signal 2">
    <location>
        <begin position="116"/>
        <end position="120"/>
    </location>
</feature>
<feature type="short sequence motif" description="Nuclear localization signal 3">
    <location>
        <begin position="137"/>
        <end position="141"/>
    </location>
</feature>
<feature type="compositionally biased region" description="Basic and acidic residues" evidence="1">
    <location>
        <begin position="70"/>
        <end position="87"/>
    </location>
</feature>
<feature type="compositionally biased region" description="Basic and acidic residues" evidence="1">
    <location>
        <begin position="94"/>
        <end position="114"/>
    </location>
</feature>
<feature type="compositionally biased region" description="Basic and acidic residues" evidence="1">
    <location>
        <begin position="122"/>
        <end position="160"/>
    </location>
</feature>
<feature type="splice variant" id="VSP_037726" description="In isoform HBZ-SI." evidence="8">
    <original>MVNFVSA</original>
    <variation>MAAS</variation>
    <location>
        <begin position="1"/>
        <end position="7"/>
    </location>
</feature>
<feature type="helix" evidence="9">
    <location>
        <begin position="19"/>
        <end position="58"/>
    </location>
</feature>
<comment type="function">
    <text evidence="7">Contributes to the regulation of viral RNA transcription by interacting with host proteins involved in transcriptional activation such as ATF4, or CREB1, and by inhibiting their activity. Additionally, HBZ suppresses host NF-kappa-B-driven transcription mediated by host RELA as well as transcription of some classical NF-kappa-B target genes, including IL8, IL2RA, IRF4, VCAM1, and VEGFA.</text>
</comment>
<comment type="subunit">
    <text evidence="2 3 4 5 6">Interacts with host ATF4; this interaction inhibits viral RNA transcriptional activation by preventing ATF4 binding to Tax-responsive elements. Interacts with host CREB1; this interaction inhibits host CREB1 transcriptional activity. Interacts with host JUN, JUNB and JUND. Interacts with host EP300.</text>
</comment>
<comment type="interaction">
    <interactant intactId="EBI-10890294">
        <id>P0C746</id>
    </interactant>
    <interactant intactId="EBI-852794">
        <id>P18846</id>
        <label>ATF1</label>
    </interactant>
    <organismsDiffer>true</organismsDiffer>
    <experiments>2</experiments>
</comment>
<comment type="interaction">
    <interactant intactId="EBI-10890294">
        <id>P0C746</id>
    </interactant>
    <interactant intactId="EBI-1170906">
        <id>P15336</id>
        <label>ATF2</label>
    </interactant>
    <organismsDiffer>true</organismsDiffer>
    <experiments>3</experiments>
</comment>
<comment type="interaction">
    <interactant intactId="EBI-10890294">
        <id>P0C746</id>
    </interactant>
    <interactant intactId="EBI-765623">
        <id>P17544</id>
        <label>ATF7</label>
    </interactant>
    <organismsDiffer>true</organismsDiffer>
    <experiments>2</experiments>
</comment>
<comment type="interaction">
    <interactant intactId="EBI-10890294">
        <id>P0C746</id>
    </interactant>
    <interactant intactId="EBI-740209">
        <id>P53567</id>
        <label>CEBPG</label>
    </interactant>
    <organismsDiffer>true</organismsDiffer>
    <experiments>2</experiments>
</comment>
<comment type="interaction">
    <interactant intactId="EBI-10890294">
        <id>P0C746</id>
    </interactant>
    <interactant intactId="EBI-711855">
        <id>P16220</id>
        <label>CREB1</label>
    </interactant>
    <organismsDiffer>true</organismsDiffer>
    <experiments>2</experiments>
</comment>
<comment type="interaction">
    <interactant intactId="EBI-10890294">
        <id>P0C746</id>
    </interactant>
    <interactant intactId="EBI-632965">
        <id>Q9NS37</id>
        <label>CREBZF</label>
    </interactant>
    <organismsDiffer>true</organismsDiffer>
    <experiments>3</experiments>
</comment>
<comment type="interaction">
    <interactant intactId="EBI-10890294">
        <id>P0C746</id>
    </interactant>
    <interactant intactId="EBI-852823">
        <id>P05412</id>
        <label>JUN</label>
    </interactant>
    <organismsDiffer>true</organismsDiffer>
    <experiments>3</experiments>
</comment>
<comment type="interaction">
    <interactant intactId="EBI-10890294">
        <id>P0C746</id>
    </interactant>
    <interactant intactId="EBI-748062">
        <id>P17275</id>
        <label>JUNB</label>
    </interactant>
    <organismsDiffer>true</organismsDiffer>
    <experiments>2</experiments>
</comment>
<comment type="interaction">
    <interactant intactId="EBI-10890294">
        <id>P0C746</id>
    </interactant>
    <interactant intactId="EBI-2682803">
        <id>P17535</id>
        <label>JUND</label>
    </interactant>
    <organismsDiffer>true</organismsDiffer>
    <experiments>2</experiments>
</comment>
<comment type="interaction">
    <interactant intactId="EBI-10890294">
        <id>P0C746</id>
    </interactant>
    <interactant intactId="EBI-2805091">
        <id>O75444</id>
        <label>MAF</label>
    </interactant>
    <organismsDiffer>true</organismsDiffer>
    <experiments>2</experiments>
</comment>
<comment type="interaction">
    <interactant intactId="EBI-10890294">
        <id>P0C746</id>
    </interactant>
    <interactant intactId="EBI-3649340">
        <id>Q9Y5Q3</id>
        <label>MAFB</label>
    </interactant>
    <organismsDiffer>true</organismsDiffer>
    <experiments>3</experiments>
</comment>
<comment type="interaction">
    <interactant intactId="EBI-10890294">
        <id>P0C746</id>
    </interactant>
    <interactant intactId="EBI-713514">
        <id>O15525</id>
        <label>MAFG</label>
    </interactant>
    <organismsDiffer>true</organismsDiffer>
    <experiments>3</experiments>
</comment>
<comment type="interaction">
    <interactant intactId="EBI-10890294">
        <id>P0C746</id>
    </interactant>
    <interactant intactId="EBI-10889526">
        <id>Q9DGW5</id>
        <label>MDV005</label>
    </interactant>
    <organismsDiffer>true</organismsDiffer>
    <experiments>2</experiments>
</comment>
<comment type="subcellular location">
    <subcellularLocation>
        <location evidence="2">Host nucleus</location>
    </subcellularLocation>
</comment>
<comment type="alternative products">
    <event type="alternative splicing"/>
    <isoform>
        <id>P0C746-1</id>
        <name>HBZ</name>
        <sequence type="displayed"/>
    </isoform>
    <isoform>
        <id>P0C746-2</id>
        <name>HBZ-SI</name>
        <sequence type="described" ref="VSP_037726"/>
    </isoform>
</comment>
<comment type="domain">
    <text>Contains three nuclear localization signals NLS-1 and NLS-2, corresponding to two regions rich in basic amino acids, and NLS-3 corresponding to its DNA-binding domain.</text>
</comment>
<comment type="miscellaneous">
    <text>Expressed from antisense transcripts. While mRNA expression levels of HBZ-SI were similar to those of HBZ, HBZ-SI seems slightly more expressed at the protein level ex vivo.</text>
</comment>
<comment type="similarity">
    <text evidence="8">Belongs to the HTLV-1 HBZ protein family.</text>
</comment>
<accession>P0C746</accession>
<protein>
    <recommendedName>
        <fullName>HTLV-1 basic zipper factor</fullName>
        <shortName>HBZ</shortName>
    </recommendedName>
</protein>
<reference key="1">
    <citation type="journal article" date="1983" name="Proc. Natl. Acad. Sci. U.S.A.">
        <title>Human adult T-cell leukemia virus: complete nucleotide sequence of the provirus genome integrated in leukemia cell DNA.</title>
        <authorList>
            <person name="Seiki M."/>
            <person name="Hattori S."/>
            <person name="Hirayama Y."/>
            <person name="Yoshida M.C."/>
        </authorList>
    </citation>
    <scope>NUCLEOTIDE SEQUENCE [GENOMIC DNA]</scope>
</reference>
<reference key="2">
    <citation type="journal article" date="2002" name="J. Virol.">
        <title>The complementary strand of the human T-cell leukemia virus type 1 RNA genome encodes a bZIP transcription factor that down-regulates viral transcription.</title>
        <authorList>
            <person name="Gaudray G."/>
            <person name="Gachon F."/>
            <person name="Basbous J."/>
            <person name="Biard-Piechaczyk M."/>
            <person name="Devaux C."/>
            <person name="Mesnard J.M."/>
        </authorList>
    </citation>
    <scope>SUBCELLULAR LOCATION</scope>
    <scope>INTERACTION WITH HOST ATF4</scope>
</reference>
<reference key="3">
    <citation type="journal article" date="2003" name="J. Biol. Chem.">
        <title>The HBZ factor of human T-cell leukemia virus type I dimerizes with transcription factors JunB and c-Jun and modulates their transcriptional activity.</title>
        <authorList>
            <person name="Basbous J."/>
            <person name="Arpin C."/>
            <person name="Gaudray G."/>
            <person name="Piechaczyk M."/>
            <person name="Devaux C."/>
            <person name="Mesnard J.M."/>
        </authorList>
    </citation>
    <scope>INTERACTION WITH HOST JUN AND JUNB</scope>
</reference>
<reference key="4">
    <citation type="journal article" date="2006" name="J. Virol.">
        <title>A novel alternative splicing isoform of human T-cell leukemia virus type 1 bZIP factor (HBZ-SI) targets distinct subnuclear localization.</title>
        <authorList>
            <person name="Murata K."/>
            <person name="Hayashibara T."/>
            <person name="Sugahara K."/>
            <person name="Uemura A."/>
            <person name="Yamaguchi T."/>
            <person name="Harasawa H."/>
            <person name="Hasegawa H."/>
            <person name="Tsuruda K."/>
            <person name="Okazaki T."/>
            <person name="Koji T."/>
            <person name="Miyanishi T."/>
            <person name="Yamada Y."/>
            <person name="Kamihira S."/>
        </authorList>
    </citation>
    <scope>ISOFORM HBZ-SI</scope>
</reference>
<reference key="5">
    <citation type="journal article" date="2007" name="J. Virol.">
        <title>Human T-cell leukemia virus type 1 (HTLV-1) bZIP protein interacts with the cellular transcription factor CREB to inhibit HTLV-1 transcription.</title>
        <authorList>
            <person name="Lemasson I."/>
            <person name="Lewis M.R."/>
            <person name="Polakowski N."/>
            <person name="Hivin P."/>
            <person name="Cavanagh M.H."/>
            <person name="Thebault S."/>
            <person name="Barbeau B."/>
            <person name="Nyborg J.K."/>
            <person name="Mesnard J.M."/>
        </authorList>
    </citation>
    <scope>INTERACTION WITH HOST CREB1</scope>
</reference>
<reference key="6">
    <citation type="journal article" date="2007" name="Retrovirology">
        <title>HTLV-1 HBZ cooperates with JunD to enhance transcription of the human telomerase reverse transcriptase gene (hTERT).</title>
        <authorList>
            <person name="Kuhlmann A.S."/>
            <person name="Villaudy J."/>
            <person name="Gazzolo L."/>
            <person name="Castellazzi M."/>
            <person name="Mesnard J.M."/>
            <person name="Duc Dodon M."/>
        </authorList>
    </citation>
    <scope>INTERACTION WITH HOST JUND</scope>
</reference>
<reference key="7">
    <citation type="journal article" date="2008" name="J. Biol. Chem.">
        <title>An interaction between the human T cell leukemia virus type 1 basic leucine zipper factor (HBZ) and the KIX domain of p300/CBP contributes to the down-regulation of tax-dependent viral transcription by HBZ.</title>
        <authorList>
            <person name="Clerc I."/>
            <person name="Polakowski N."/>
            <person name="Andre-Arpin C."/>
            <person name="Cook P."/>
            <person name="Barbeau B."/>
            <person name="Mesnard J.M."/>
            <person name="Lemasson I."/>
        </authorList>
    </citation>
    <scope>INTERACTION WITH HOST EP300</scope>
</reference>
<reference key="8">
    <citation type="journal article" date="2009" name="Blood">
        <title>Human T-cell leukemia virus type 1 bZIP factor selectively suppresses the classical pathway of NF-kappaB.</title>
        <authorList>
            <person name="Zhao T."/>
            <person name="Yasunaga J."/>
            <person name="Satou Y."/>
            <person name="Nakao M."/>
            <person name="Takahashi M."/>
            <person name="Fujii M."/>
            <person name="Matsuoka M."/>
        </authorList>
    </citation>
    <scope>FUNCTION</scope>
</reference>
<dbReference type="EMBL" id="J02029">
    <property type="status" value="NOT_ANNOTATED_CDS"/>
    <property type="molecule type" value="Genomic_DNA"/>
</dbReference>
<dbReference type="PDB" id="6DMX">
    <property type="method" value="X-ray"/>
    <property type="resolution" value="2.80 A"/>
    <property type="chains" value="E/J=6-59"/>
</dbReference>
<dbReference type="PDBsum" id="6DMX"/>
<dbReference type="SMR" id="P0C746"/>
<dbReference type="IntAct" id="P0C746">
    <property type="interactions" value="15"/>
</dbReference>
<dbReference type="KEGG" id="ag:P0C746"/>
<dbReference type="Proteomes" id="UP000007683">
    <property type="component" value="Segment"/>
</dbReference>
<dbReference type="GO" id="GO:0042025">
    <property type="term" value="C:host cell nucleus"/>
    <property type="evidence" value="ECO:0007669"/>
    <property type="project" value="UniProtKB-SubCell"/>
</dbReference>
<dbReference type="GO" id="GO:0003677">
    <property type="term" value="F:DNA binding"/>
    <property type="evidence" value="ECO:0007669"/>
    <property type="project" value="UniProtKB-KW"/>
</dbReference>
<dbReference type="GO" id="GO:0016032">
    <property type="term" value="P:viral process"/>
    <property type="evidence" value="ECO:0007669"/>
    <property type="project" value="InterPro"/>
</dbReference>
<dbReference type="InterPro" id="IPR026220">
    <property type="entry name" value="HTLV1ZIPPER"/>
</dbReference>
<dbReference type="PRINTS" id="PR02097">
    <property type="entry name" value="HTLV1ZIPPER"/>
</dbReference>
<keyword id="KW-0002">3D-structure</keyword>
<keyword id="KW-0025">Alternative splicing</keyword>
<keyword id="KW-0238">DNA-binding</keyword>
<keyword id="KW-1048">Host nucleus</keyword>
<keyword id="KW-0945">Host-virus interaction</keyword>
<keyword id="KW-1185">Reference proteome</keyword>
<proteinExistence type="evidence at protein level"/>
<organismHost>
    <name type="scientific">Homo sapiens</name>
    <name type="common">Human</name>
    <dbReference type="NCBI Taxonomy" id="9606"/>
</organismHost>
<evidence type="ECO:0000256" key="1">
    <source>
        <dbReference type="SAM" id="MobiDB-lite"/>
    </source>
</evidence>
<evidence type="ECO:0000269" key="2">
    <source>
    </source>
</evidence>
<evidence type="ECO:0000269" key="3">
    <source>
    </source>
</evidence>
<evidence type="ECO:0000269" key="4">
    <source>
    </source>
</evidence>
<evidence type="ECO:0000269" key="5">
    <source>
    </source>
</evidence>
<evidence type="ECO:0000269" key="6">
    <source>
    </source>
</evidence>
<evidence type="ECO:0000269" key="7">
    <source>
    </source>
</evidence>
<evidence type="ECO:0000305" key="8"/>
<evidence type="ECO:0007829" key="9">
    <source>
        <dbReference type="PDB" id="6DMX"/>
    </source>
</evidence>
<sequence>MVNFVSAGLFRCLPVSCPEDLLVEELVDGLLSLEEELKDKEEEEAVLDGLLSLEEESRGRLRRGPPGEKAPPRGETHRDRQRRAEEKRKRKKEREKEEEKQTAEYLKRKEEEKARRRRRAEKKAADVARRKQEEQERRERKWRQGAEKAKQHSARKEKMQELGIDGYTRQLEGEVESLEAERRKLLQEKEDLMGEVNYWQGRLEAMWLQ</sequence>
<gene>
    <name type="primary">HBZ</name>
</gene>
<name>HBZ_HTL1A</name>
<organism>
    <name type="scientific">Human T-cell leukemia virus 1 (strain Japan ATK-1 subtype A)</name>
    <name type="common">HTLV-1</name>
    <dbReference type="NCBI Taxonomy" id="11926"/>
    <lineage>
        <taxon>Viruses</taxon>
        <taxon>Riboviria</taxon>
        <taxon>Pararnavirae</taxon>
        <taxon>Artverviricota</taxon>
        <taxon>Revtraviricetes</taxon>
        <taxon>Ortervirales</taxon>
        <taxon>Retroviridae</taxon>
        <taxon>Orthoretrovirinae</taxon>
        <taxon>Deltaretrovirus</taxon>
        <taxon>Primate T-lymphotropic virus 1</taxon>
    </lineage>
</organism>